<keyword id="KW-0020">Allergen</keyword>
<keyword id="KW-0903">Direct protein sequencing</keyword>
<keyword id="KW-0389">IgE-binding protein</keyword>
<proteinExistence type="evidence at protein level"/>
<accession>P82944</accession>
<dbReference type="Allergome" id="912">
    <property type="allergen name" value="Pru du 2S Albumin"/>
</dbReference>
<dbReference type="GO" id="GO:0019863">
    <property type="term" value="F:IgE binding"/>
    <property type="evidence" value="ECO:0007669"/>
    <property type="project" value="UniProtKB-KW"/>
</dbReference>
<sequence>VTXEEGXYSISDQSKVGEQXIRSPDREM</sequence>
<evidence type="ECO:0000256" key="1">
    <source>
        <dbReference type="SAM" id="MobiDB-lite"/>
    </source>
</evidence>
<evidence type="ECO:0000269" key="2">
    <source>
    </source>
</evidence>
<evidence type="ECO:0000303" key="3">
    <source>
    </source>
</evidence>
<evidence type="ECO:0000305" key="4"/>
<reference evidence="4" key="1">
    <citation type="journal article" date="2002" name="Int. Arch. Allergy Immunol.">
        <title>Identification and characterisation of the IgE-binding proteins 2S albumin and conglutin gamma in almond (Prunus dulcis) seeds.</title>
        <authorList>
            <person name="Poltronieri P."/>
            <person name="Cappello M.S."/>
            <person name="Dohmae N."/>
            <person name="Conti A."/>
            <person name="Fortunato D."/>
            <person name="Pastorello E.A."/>
            <person name="Ortolani C."/>
            <person name="Zacheo G."/>
        </authorList>
    </citation>
    <scope>PROTEIN SEQUENCE</scope>
    <scope>ALLERGEN</scope>
    <source>
        <strain evidence="2">cv. Tuono</strain>
        <tissue evidence="2">Seed</tissue>
    </source>
</reference>
<feature type="chain" id="PRO_0000262966" description="Seed allergenic protein 1">
    <location>
        <begin position="1"/>
        <end position="28" status="greater than"/>
    </location>
</feature>
<feature type="region of interest" description="Disordered" evidence="1">
    <location>
        <begin position="1"/>
        <end position="28"/>
    </location>
</feature>
<feature type="non-consecutive residues" evidence="3">
    <location>
        <begin position="18"/>
        <end position="19"/>
    </location>
</feature>
<feature type="non-terminal residue" evidence="3">
    <location>
        <position position="28"/>
    </location>
</feature>
<organism>
    <name type="scientific">Prunus dulcis</name>
    <name type="common">Almond</name>
    <name type="synonym">Amygdalus dulcis</name>
    <dbReference type="NCBI Taxonomy" id="3755"/>
    <lineage>
        <taxon>Eukaryota</taxon>
        <taxon>Viridiplantae</taxon>
        <taxon>Streptophyta</taxon>
        <taxon>Embryophyta</taxon>
        <taxon>Tracheophyta</taxon>
        <taxon>Spermatophyta</taxon>
        <taxon>Magnoliopsida</taxon>
        <taxon>eudicotyledons</taxon>
        <taxon>Gunneridae</taxon>
        <taxon>Pentapetalae</taxon>
        <taxon>rosids</taxon>
        <taxon>fabids</taxon>
        <taxon>Rosales</taxon>
        <taxon>Rosaceae</taxon>
        <taxon>Amygdaloideae</taxon>
        <taxon>Amygdaleae</taxon>
        <taxon>Prunus</taxon>
    </lineage>
</organism>
<name>ALL1_PRUDU</name>
<protein>
    <recommendedName>
        <fullName>Seed allergenic protein 1</fullName>
    </recommendedName>
    <allergenName>Pru du ?</allergenName>
</protein>
<comment type="allergen">
    <text evidence="2">Causes an allergic reaction in human. Binds to IgE.</text>
</comment>